<organism>
    <name type="scientific">Talaromyces wortmannii</name>
    <name type="common">Penicillium wortmannii</name>
    <dbReference type="NCBI Taxonomy" id="28567"/>
    <lineage>
        <taxon>Eukaryota</taxon>
        <taxon>Fungi</taxon>
        <taxon>Dikarya</taxon>
        <taxon>Ascomycota</taxon>
        <taxon>Pezizomycotina</taxon>
        <taxon>Eurotiomycetes</taxon>
        <taxon>Eurotiomycetidae</taxon>
        <taxon>Eurotiales</taxon>
        <taxon>Trichocomaceae</taxon>
        <taxon>Talaromyces</taxon>
        <taxon>Talaromyces sect. Islandici</taxon>
    </lineage>
</organism>
<reference key="1">
    <citation type="journal article" date="2019" name="Org. Biomol. Chem.">
        <title>Biosynthesis of an anti-tuberculosis sesterterpenoid asperterpenoid A.</title>
        <authorList>
            <person name="Huang J.H."/>
            <person name="Lv J.M."/>
            <person name="Wang Q.Z."/>
            <person name="Zou J."/>
            <person name="Lu Y.J."/>
            <person name="Wang Q.L."/>
            <person name="Chen D.N."/>
            <person name="Yao X.S."/>
            <person name="Gao H."/>
            <person name="Hu D."/>
        </authorList>
    </citation>
    <scope>NUCLEOTIDE SEQUENCE [GENOMIC DNA]</scope>
    <scope>FUNCTION</scope>
    <scope>CATALYTIC ACTIVITY</scope>
    <scope>PATHWAY</scope>
    <scope>BIOTECHNOLOGY</scope>
    <source>
        <strain>ATCC 26942 / CBS 387.67 / CCM F-175 / VKM F-2091</strain>
    </source>
</reference>
<comment type="function">
    <text evidence="4">Cytochrome P450 monooxygenase; part of the gene cluster that mediates the biosynthesis of the asperterpenoids, sesterterpenes that exhibit anti-tuberculosis activity (PubMed:30548032). The first step of the pathway is performed by the sesterterpene synthase astC that possesses both prenyl transferase and terpene cyclase activity, converting isopentenyl diphosphate and dimethylallyl diphosphate into geranylfarnesyl diphosphate (GFPP) and further converting GFPP into preasperterpenoid A, respectively (PubMed:30548032). The cytochrome P450 monooxygenase astB then dually oxidizes preasperterpenoid A to produce asperterpenoid A along with a minor product, asperterpenoid B (PubMed:30548032). Finally, the cytochrome P450 monooxygenase astA converts asperterpenoid A into asperterpenoid C (PubMed:30548032).</text>
</comment>
<comment type="catalytic activity">
    <reaction evidence="4">
        <text>preasperterpenoid A + 4 reduced [NADPH--hemoprotein reductase] + 4 O2 = asperterpenoid A + 4 oxidized [NADPH--hemoprotein reductase] + 5 H2O + 5 H(+)</text>
        <dbReference type="Rhea" id="RHEA:66836"/>
        <dbReference type="Rhea" id="RHEA-COMP:11964"/>
        <dbReference type="Rhea" id="RHEA-COMP:11965"/>
        <dbReference type="ChEBI" id="CHEBI:15377"/>
        <dbReference type="ChEBI" id="CHEBI:15378"/>
        <dbReference type="ChEBI" id="CHEBI:15379"/>
        <dbReference type="ChEBI" id="CHEBI:57618"/>
        <dbReference type="ChEBI" id="CHEBI:58210"/>
        <dbReference type="ChEBI" id="CHEBI:167511"/>
        <dbReference type="ChEBI" id="CHEBI:167512"/>
    </reaction>
    <physiologicalReaction direction="left-to-right" evidence="4">
        <dbReference type="Rhea" id="RHEA:66837"/>
    </physiologicalReaction>
</comment>
<comment type="catalytic activity">
    <reaction evidence="4">
        <text>asperterpenoid A + 2 reduced [NADPH--hemoprotein reductase] + 2 O2 = asperterpenoid B + 2 oxidized [NADPH--hemoprotein reductase] + 3 H2O + 3 H(+)</text>
        <dbReference type="Rhea" id="RHEA:66840"/>
        <dbReference type="Rhea" id="RHEA-COMP:11964"/>
        <dbReference type="Rhea" id="RHEA-COMP:11965"/>
        <dbReference type="ChEBI" id="CHEBI:15377"/>
        <dbReference type="ChEBI" id="CHEBI:15378"/>
        <dbReference type="ChEBI" id="CHEBI:15379"/>
        <dbReference type="ChEBI" id="CHEBI:57618"/>
        <dbReference type="ChEBI" id="CHEBI:58210"/>
        <dbReference type="ChEBI" id="CHEBI:167512"/>
        <dbReference type="ChEBI" id="CHEBI:167513"/>
    </reaction>
    <physiologicalReaction direction="left-to-right" evidence="4">
        <dbReference type="Rhea" id="RHEA:66841"/>
    </physiologicalReaction>
</comment>
<comment type="cofactor">
    <cofactor evidence="1">
        <name>heme</name>
        <dbReference type="ChEBI" id="CHEBI:30413"/>
    </cofactor>
</comment>
<comment type="pathway">
    <text evidence="4">Secondary metabolite biosynthesis; terpenoid biosynthesis.</text>
</comment>
<comment type="subcellular location">
    <subcellularLocation>
        <location evidence="2">Membrane</location>
        <topology evidence="2">Single-pass membrane protein</topology>
    </subcellularLocation>
</comment>
<comment type="biotechnology">
    <text evidence="4">Asperterpenoids A and B, but not the final product asperterpenoid C, exhibit potent inhibitory activity against Mycobacterium tuberculosis protein tyrosine phosphatase B with IC(50) values of 3 to 6 uM.</text>
</comment>
<comment type="similarity">
    <text evidence="6">Belongs to the cytochrome P450 family.</text>
</comment>
<proteinExistence type="evidence at protein level"/>
<gene>
    <name evidence="5" type="primary">astB</name>
    <name evidence="5" type="synonym">aspB</name>
</gene>
<sequence length="498" mass="57028">MIDSLSFTTMPVVLLVGLVLYQLLAFTYRLFFSPLAKFPGQKIAGMTHWYEFYHDVIRRGQYTFHIRDMHKKYGPILRINPYELHISDPSFYNEIYAVQNRRRDRWEWSTRPGGFGGSVGGTNPHELHRRRRAALNPFFSRANIRKLQHEIDQKAVQLVERLEKETDRVIKVNHAFAALTNDIVMQYSFGRDDNRAAHKDRAARALPMEMLSKISSVVAMFWQEKQSITEEVRQILNGTNKAYKERPNRTIYHGILESKLPPEEKELNRLAEEAQITIGAGTLATAWVMSVGMYHLLAPGSVSMLKTLREELQRAIPDPSEPIDLAALEKLPYLTGVVKECLRLGNGTTTRLQRIAPDETLIYTDPNTGKVWDIPPGTPVSLSSLHIHHDETIFADPESFRPERWIENPDLERYLLTFSKGSRQCLGIHLAYAEMYIVLARVFRLYGRKEEGPSKGPSDKLGNLELFETELRDTLCVADLVVPAVWEGSQGIRIKVTE</sequence>
<name>ASTB_TALWO</name>
<dbReference type="EC" id="1.-.-.-" evidence="4"/>
<dbReference type="EMBL" id="MK140602">
    <property type="protein sequence ID" value="AZQ56743.1"/>
    <property type="molecule type" value="Genomic_DNA"/>
</dbReference>
<dbReference type="SMR" id="A0A3S9NM20"/>
<dbReference type="GlyCosmos" id="A0A3S9NM20">
    <property type="glycosylation" value="3 sites, No reported glycans"/>
</dbReference>
<dbReference type="UniPathway" id="UPA00213"/>
<dbReference type="GO" id="GO:0016020">
    <property type="term" value="C:membrane"/>
    <property type="evidence" value="ECO:0007669"/>
    <property type="project" value="UniProtKB-SubCell"/>
</dbReference>
<dbReference type="GO" id="GO:0020037">
    <property type="term" value="F:heme binding"/>
    <property type="evidence" value="ECO:0007669"/>
    <property type="project" value="InterPro"/>
</dbReference>
<dbReference type="GO" id="GO:0005506">
    <property type="term" value="F:iron ion binding"/>
    <property type="evidence" value="ECO:0007669"/>
    <property type="project" value="InterPro"/>
</dbReference>
<dbReference type="GO" id="GO:0004497">
    <property type="term" value="F:monooxygenase activity"/>
    <property type="evidence" value="ECO:0007669"/>
    <property type="project" value="UniProtKB-KW"/>
</dbReference>
<dbReference type="GO" id="GO:0016705">
    <property type="term" value="F:oxidoreductase activity, acting on paired donors, with incorporation or reduction of molecular oxygen"/>
    <property type="evidence" value="ECO:0007669"/>
    <property type="project" value="InterPro"/>
</dbReference>
<dbReference type="GO" id="GO:0016114">
    <property type="term" value="P:terpenoid biosynthetic process"/>
    <property type="evidence" value="ECO:0007669"/>
    <property type="project" value="UniProtKB-UniPathway"/>
</dbReference>
<dbReference type="CDD" id="cd11062">
    <property type="entry name" value="CYP58-like"/>
    <property type="match status" value="1"/>
</dbReference>
<dbReference type="Gene3D" id="1.10.630.10">
    <property type="entry name" value="Cytochrome P450"/>
    <property type="match status" value="1"/>
</dbReference>
<dbReference type="InterPro" id="IPR001128">
    <property type="entry name" value="Cyt_P450"/>
</dbReference>
<dbReference type="InterPro" id="IPR017972">
    <property type="entry name" value="Cyt_P450_CS"/>
</dbReference>
<dbReference type="InterPro" id="IPR002403">
    <property type="entry name" value="Cyt_P450_E_grp-IV"/>
</dbReference>
<dbReference type="InterPro" id="IPR036396">
    <property type="entry name" value="Cyt_P450_sf"/>
</dbReference>
<dbReference type="InterPro" id="IPR050121">
    <property type="entry name" value="Cytochrome_P450_monoxygenase"/>
</dbReference>
<dbReference type="PANTHER" id="PTHR24305">
    <property type="entry name" value="CYTOCHROME P450"/>
    <property type="match status" value="1"/>
</dbReference>
<dbReference type="PANTHER" id="PTHR24305:SF157">
    <property type="entry name" value="N-ACETYLTRYPTOPHAN 6-HYDROXYLASE IVOC-RELATED"/>
    <property type="match status" value="1"/>
</dbReference>
<dbReference type="Pfam" id="PF00067">
    <property type="entry name" value="p450"/>
    <property type="match status" value="1"/>
</dbReference>
<dbReference type="PRINTS" id="PR00465">
    <property type="entry name" value="EP450IV"/>
</dbReference>
<dbReference type="SUPFAM" id="SSF48264">
    <property type="entry name" value="Cytochrome P450"/>
    <property type="match status" value="1"/>
</dbReference>
<dbReference type="PROSITE" id="PS00086">
    <property type="entry name" value="CYTOCHROME_P450"/>
    <property type="match status" value="1"/>
</dbReference>
<accession>A0A3S9NM20</accession>
<keyword id="KW-0325">Glycoprotein</keyword>
<keyword id="KW-0349">Heme</keyword>
<keyword id="KW-0408">Iron</keyword>
<keyword id="KW-0472">Membrane</keyword>
<keyword id="KW-0479">Metal-binding</keyword>
<keyword id="KW-0503">Monooxygenase</keyword>
<keyword id="KW-0560">Oxidoreductase</keyword>
<keyword id="KW-0812">Transmembrane</keyword>
<keyword id="KW-1133">Transmembrane helix</keyword>
<feature type="chain" id="PRO_0000452655" description="Cytochrome P450 monooxygenase astB">
    <location>
        <begin position="1"/>
        <end position="498"/>
    </location>
</feature>
<feature type="transmembrane region" description="Helical" evidence="2">
    <location>
        <begin position="7"/>
        <end position="27"/>
    </location>
</feature>
<feature type="binding site" description="axial binding residue" evidence="1">
    <location>
        <position position="425"/>
    </location>
    <ligand>
        <name>heme</name>
        <dbReference type="ChEBI" id="CHEBI:30413"/>
    </ligand>
    <ligandPart>
        <name>Fe</name>
        <dbReference type="ChEBI" id="CHEBI:18248"/>
    </ligandPart>
</feature>
<feature type="glycosylation site" description="N-linked (GlcNAc...) asparagine" evidence="3">
    <location>
        <position position="237"/>
    </location>
</feature>
<feature type="glycosylation site" description="N-linked (GlcNAc...) asparagine" evidence="3">
    <location>
        <position position="248"/>
    </location>
</feature>
<feature type="glycosylation site" description="N-linked (GlcNAc...) asparagine" evidence="3">
    <location>
        <position position="346"/>
    </location>
</feature>
<protein>
    <recommendedName>
        <fullName evidence="5">Cytochrome P450 monooxygenase astB</fullName>
        <ecNumber evidence="4">1.-.-.-</ecNumber>
    </recommendedName>
    <alternativeName>
        <fullName evidence="5">Asperterpenoid biosynthesis cluster protein B</fullName>
    </alternativeName>
</protein>
<evidence type="ECO:0000250" key="1">
    <source>
        <dbReference type="UniProtKB" id="P04798"/>
    </source>
</evidence>
<evidence type="ECO:0000255" key="2"/>
<evidence type="ECO:0000255" key="3">
    <source>
        <dbReference type="PROSITE-ProRule" id="PRU00498"/>
    </source>
</evidence>
<evidence type="ECO:0000269" key="4">
    <source>
    </source>
</evidence>
<evidence type="ECO:0000303" key="5">
    <source>
    </source>
</evidence>
<evidence type="ECO:0000305" key="6"/>